<reference key="1">
    <citation type="journal article" date="2008" name="PLoS Genet.">
        <title>Genomic islands in the pathogenic filamentous fungus Aspergillus fumigatus.</title>
        <authorList>
            <person name="Fedorova N.D."/>
            <person name="Khaldi N."/>
            <person name="Joardar V.S."/>
            <person name="Maiti R."/>
            <person name="Amedeo P."/>
            <person name="Anderson M.J."/>
            <person name="Crabtree J."/>
            <person name="Silva J.C."/>
            <person name="Badger J.H."/>
            <person name="Albarraq A."/>
            <person name="Angiuoli S."/>
            <person name="Bussey H."/>
            <person name="Bowyer P."/>
            <person name="Cotty P.J."/>
            <person name="Dyer P.S."/>
            <person name="Egan A."/>
            <person name="Galens K."/>
            <person name="Fraser-Liggett C.M."/>
            <person name="Haas B.J."/>
            <person name="Inman J.M."/>
            <person name="Kent R."/>
            <person name="Lemieux S."/>
            <person name="Malavazi I."/>
            <person name="Orvis J."/>
            <person name="Roemer T."/>
            <person name="Ronning C.M."/>
            <person name="Sundaram J.P."/>
            <person name="Sutton G."/>
            <person name="Turner G."/>
            <person name="Venter J.C."/>
            <person name="White O.R."/>
            <person name="Whitty B.R."/>
            <person name="Youngman P."/>
            <person name="Wolfe K.H."/>
            <person name="Goldman G.H."/>
            <person name="Wortman J.R."/>
            <person name="Jiang B."/>
            <person name="Denning D.W."/>
            <person name="Nierman W.C."/>
        </authorList>
    </citation>
    <scope>NUCLEOTIDE SEQUENCE [LARGE SCALE GENOMIC DNA]</scope>
    <source>
        <strain>ATCC 1007 / CBS 513.65 / DSM 816 / NCTC 3887 / NRRL 1 / QM 1276 / 107</strain>
    </source>
</reference>
<evidence type="ECO:0000250" key="1"/>
<evidence type="ECO:0000255" key="2"/>
<evidence type="ECO:0000256" key="3">
    <source>
        <dbReference type="SAM" id="MobiDB-lite"/>
    </source>
</evidence>
<evidence type="ECO:0000305" key="4"/>
<protein>
    <recommendedName>
        <fullName>Probable pectate lyase E</fullName>
        <ecNumber>4.2.2.2</ecNumber>
    </recommendedName>
</protein>
<gene>
    <name type="primary">plyE</name>
    <name type="ORF">ACLA_059210</name>
</gene>
<name>PLYE_ASPCL</name>
<feature type="signal peptide" evidence="2">
    <location>
        <begin position="1"/>
        <end position="17"/>
    </location>
</feature>
<feature type="chain" id="PRO_0000394580" description="Probable pectate lyase E">
    <location>
        <begin position="18"/>
        <end position="254"/>
    </location>
</feature>
<feature type="region of interest" description="Disordered" evidence="3">
    <location>
        <begin position="228"/>
        <end position="254"/>
    </location>
</feature>
<feature type="glycosylation site" description="N-linked (GlcNAc...) asparagine" evidence="2">
    <location>
        <position position="175"/>
    </location>
</feature>
<organism>
    <name type="scientific">Aspergillus clavatus (strain ATCC 1007 / CBS 513.65 / DSM 816 / NCTC 3887 / NRRL 1 / QM 1276 / 107)</name>
    <dbReference type="NCBI Taxonomy" id="344612"/>
    <lineage>
        <taxon>Eukaryota</taxon>
        <taxon>Fungi</taxon>
        <taxon>Dikarya</taxon>
        <taxon>Ascomycota</taxon>
        <taxon>Pezizomycotina</taxon>
        <taxon>Eurotiomycetes</taxon>
        <taxon>Eurotiomycetidae</taxon>
        <taxon>Eurotiales</taxon>
        <taxon>Aspergillaceae</taxon>
        <taxon>Aspergillus</taxon>
        <taxon>Aspergillus subgen. Fumigati</taxon>
    </lineage>
</organism>
<accession>A1C4B8</accession>
<dbReference type="EC" id="4.2.2.2"/>
<dbReference type="EMBL" id="DS026990">
    <property type="protein sequence ID" value="EAW15258.1"/>
    <property type="molecule type" value="Genomic_DNA"/>
</dbReference>
<dbReference type="RefSeq" id="XP_001276684.1">
    <property type="nucleotide sequence ID" value="XM_001276683.1"/>
</dbReference>
<dbReference type="SMR" id="A1C4B8"/>
<dbReference type="STRING" id="344612.A1C4B8"/>
<dbReference type="GlyCosmos" id="A1C4B8">
    <property type="glycosylation" value="1 site, No reported glycans"/>
</dbReference>
<dbReference type="EnsemblFungi" id="EAW15258">
    <property type="protein sequence ID" value="EAW15258"/>
    <property type="gene ID" value="ACLA_059210"/>
</dbReference>
<dbReference type="GeneID" id="4708969"/>
<dbReference type="KEGG" id="act:ACLA_059210"/>
<dbReference type="VEuPathDB" id="FungiDB:ACLA_059210"/>
<dbReference type="eggNOG" id="ENOG502QU39">
    <property type="taxonomic scope" value="Eukaryota"/>
</dbReference>
<dbReference type="HOGENOM" id="CLU_044863_3_1_1"/>
<dbReference type="OMA" id="KCTGQVE"/>
<dbReference type="OrthoDB" id="441042at2759"/>
<dbReference type="BRENDA" id="4.2.2.2">
    <property type="organism ID" value="502"/>
</dbReference>
<dbReference type="Proteomes" id="UP000006701">
    <property type="component" value="Unassembled WGS sequence"/>
</dbReference>
<dbReference type="GO" id="GO:0005576">
    <property type="term" value="C:extracellular region"/>
    <property type="evidence" value="ECO:0007669"/>
    <property type="project" value="UniProtKB-SubCell"/>
</dbReference>
<dbReference type="GO" id="GO:0030570">
    <property type="term" value="F:pectate lyase activity"/>
    <property type="evidence" value="ECO:0007669"/>
    <property type="project" value="UniProtKB-EC"/>
</dbReference>
<dbReference type="GO" id="GO:0071555">
    <property type="term" value="P:cell wall organization"/>
    <property type="evidence" value="ECO:0007669"/>
    <property type="project" value="UniProtKB-KW"/>
</dbReference>
<dbReference type="GO" id="GO:0045490">
    <property type="term" value="P:pectin catabolic process"/>
    <property type="evidence" value="ECO:0007669"/>
    <property type="project" value="TreeGrafter"/>
</dbReference>
<dbReference type="FunFam" id="2.160.20.10:FF:000044">
    <property type="entry name" value="Pectate lyase E"/>
    <property type="match status" value="1"/>
</dbReference>
<dbReference type="Gene3D" id="2.160.20.10">
    <property type="entry name" value="Single-stranded right-handed beta-helix, Pectin lyase-like"/>
    <property type="match status" value="1"/>
</dbReference>
<dbReference type="InterPro" id="IPR004898">
    <property type="entry name" value="Pectate_lyase_PlyH/PlyE-like"/>
</dbReference>
<dbReference type="InterPro" id="IPR012334">
    <property type="entry name" value="Pectin_lyas_fold"/>
</dbReference>
<dbReference type="InterPro" id="IPR011050">
    <property type="entry name" value="Pectin_lyase_fold/virulence"/>
</dbReference>
<dbReference type="PANTHER" id="PTHR33407:SF8">
    <property type="entry name" value="PECTATE LYASE E"/>
    <property type="match status" value="1"/>
</dbReference>
<dbReference type="PANTHER" id="PTHR33407">
    <property type="entry name" value="PECTATE LYASE F-RELATED"/>
    <property type="match status" value="1"/>
</dbReference>
<dbReference type="Pfam" id="PF03211">
    <property type="entry name" value="Pectate_lyase"/>
    <property type="match status" value="1"/>
</dbReference>
<dbReference type="SUPFAM" id="SSF51126">
    <property type="entry name" value="Pectin lyase-like"/>
    <property type="match status" value="1"/>
</dbReference>
<proteinExistence type="inferred from homology"/>
<comment type="function">
    <text evidence="1">Pectinolytic enzyme consist of four classes of enzymes: pectin lyase, polygalacturonase, pectin methylesterase and rhamnogalacturonase. Among pectinolytic enzymes, pectin lyase is the most important in depolymerization of pectin, since it cleaves internal glycosidic bonds of highly methylated pectins. Favors pectate, the anion, over pectin, the methyl ester (By similarity).</text>
</comment>
<comment type="catalytic activity">
    <reaction>
        <text>Eliminative cleavage of (1-&gt;4)-alpha-D-galacturonan to give oligosaccharides with 4-deoxy-alpha-D-galact-4-enuronosyl groups at their non-reducing ends.</text>
        <dbReference type="EC" id="4.2.2.2"/>
    </reaction>
</comment>
<comment type="cofactor">
    <cofactor evidence="1">
        <name>Ca(2+)</name>
        <dbReference type="ChEBI" id="CHEBI:29108"/>
    </cofactor>
    <text evidence="1">Binds 1 Ca(2+) ion per subunit.</text>
</comment>
<comment type="subcellular location">
    <subcellularLocation>
        <location evidence="1">Secreted</location>
    </subcellularLocation>
</comment>
<comment type="similarity">
    <text evidence="4">Belongs to the polysaccharide lyase 3 family.</text>
</comment>
<keyword id="KW-0106">Calcium</keyword>
<keyword id="KW-0119">Carbohydrate metabolism</keyword>
<keyword id="KW-0961">Cell wall biogenesis/degradation</keyword>
<keyword id="KW-0325">Glycoprotein</keyword>
<keyword id="KW-0456">Lyase</keyword>
<keyword id="KW-0624">Polysaccharide degradation</keyword>
<keyword id="KW-1185">Reference proteome</keyword>
<keyword id="KW-0964">Secreted</keyword>
<keyword id="KW-0732">Signal</keyword>
<sequence>MLQSLLLLPLFLTSAFATPHDPTAHQALEKRATFPIPSSKGSVTLRSTQYVKGTFDGGMKTYGRGVECTGQKEGGEKDAVFVVEEGGILKNVIIGADQIKGVYCKGSCTIQNVWWKDVCEDALSLKGSGSGTYKIIGGGAQNADDKVIQHNSGGTVMIQGFTVSNFGKLYRSCGNCSKQYKRSVQISGVKAYNGKTLVGINSNYGDTASIDACASSVKDICVEYEGTNNNGKEPKKKSSGPSKACEYNQPLKKC</sequence>